<reference key="1">
    <citation type="journal article" date="2005" name="Nature">
        <title>The genome of the social amoeba Dictyostelium discoideum.</title>
        <authorList>
            <person name="Eichinger L."/>
            <person name="Pachebat J.A."/>
            <person name="Gloeckner G."/>
            <person name="Rajandream M.A."/>
            <person name="Sucgang R."/>
            <person name="Berriman M."/>
            <person name="Song J."/>
            <person name="Olsen R."/>
            <person name="Szafranski K."/>
            <person name="Xu Q."/>
            <person name="Tunggal B."/>
            <person name="Kummerfeld S."/>
            <person name="Madera M."/>
            <person name="Konfortov B.A."/>
            <person name="Rivero F."/>
            <person name="Bankier A.T."/>
            <person name="Lehmann R."/>
            <person name="Hamlin N."/>
            <person name="Davies R."/>
            <person name="Gaudet P."/>
            <person name="Fey P."/>
            <person name="Pilcher K."/>
            <person name="Chen G."/>
            <person name="Saunders D."/>
            <person name="Sodergren E.J."/>
            <person name="Davis P."/>
            <person name="Kerhornou A."/>
            <person name="Nie X."/>
            <person name="Hall N."/>
            <person name="Anjard C."/>
            <person name="Hemphill L."/>
            <person name="Bason N."/>
            <person name="Farbrother P."/>
            <person name="Desany B."/>
            <person name="Just E."/>
            <person name="Morio T."/>
            <person name="Rost R."/>
            <person name="Churcher C.M."/>
            <person name="Cooper J."/>
            <person name="Haydock S."/>
            <person name="van Driessche N."/>
            <person name="Cronin A."/>
            <person name="Goodhead I."/>
            <person name="Muzny D.M."/>
            <person name="Mourier T."/>
            <person name="Pain A."/>
            <person name="Lu M."/>
            <person name="Harper D."/>
            <person name="Lindsay R."/>
            <person name="Hauser H."/>
            <person name="James K.D."/>
            <person name="Quiles M."/>
            <person name="Madan Babu M."/>
            <person name="Saito T."/>
            <person name="Buchrieser C."/>
            <person name="Wardroper A."/>
            <person name="Felder M."/>
            <person name="Thangavelu M."/>
            <person name="Johnson D."/>
            <person name="Knights A."/>
            <person name="Loulseged H."/>
            <person name="Mungall K.L."/>
            <person name="Oliver K."/>
            <person name="Price C."/>
            <person name="Quail M.A."/>
            <person name="Urushihara H."/>
            <person name="Hernandez J."/>
            <person name="Rabbinowitsch E."/>
            <person name="Steffen D."/>
            <person name="Sanders M."/>
            <person name="Ma J."/>
            <person name="Kohara Y."/>
            <person name="Sharp S."/>
            <person name="Simmonds M.N."/>
            <person name="Spiegler S."/>
            <person name="Tivey A."/>
            <person name="Sugano S."/>
            <person name="White B."/>
            <person name="Walker D."/>
            <person name="Woodward J.R."/>
            <person name="Winckler T."/>
            <person name="Tanaka Y."/>
            <person name="Shaulsky G."/>
            <person name="Schleicher M."/>
            <person name="Weinstock G.M."/>
            <person name="Rosenthal A."/>
            <person name="Cox E.C."/>
            <person name="Chisholm R.L."/>
            <person name="Gibbs R.A."/>
            <person name="Loomis W.F."/>
            <person name="Platzer M."/>
            <person name="Kay R.R."/>
            <person name="Williams J.G."/>
            <person name="Dear P.H."/>
            <person name="Noegel A.A."/>
            <person name="Barrell B.G."/>
            <person name="Kuspa A."/>
        </authorList>
    </citation>
    <scope>NUCLEOTIDE SEQUENCE [LARGE SCALE GENOMIC DNA]</scope>
    <source>
        <strain>AX4</strain>
    </source>
</reference>
<protein>
    <recommendedName>
        <fullName>ADP-ribosylation factor F</fullName>
    </recommendedName>
</protein>
<evidence type="ECO:0000250" key="1"/>
<evidence type="ECO:0000305" key="2"/>
<dbReference type="EMBL" id="AAFI02000140">
    <property type="protein sequence ID" value="EAL62745.1"/>
    <property type="molecule type" value="Genomic_DNA"/>
</dbReference>
<dbReference type="RefSeq" id="XP_636231.1">
    <property type="nucleotide sequence ID" value="XM_631139.1"/>
</dbReference>
<dbReference type="SMR" id="Q54HK2"/>
<dbReference type="FunCoup" id="Q54HK2">
    <property type="interactions" value="5"/>
</dbReference>
<dbReference type="STRING" id="44689.Q54HK2"/>
<dbReference type="GlyGen" id="Q54HK2">
    <property type="glycosylation" value="1 site"/>
</dbReference>
<dbReference type="PaxDb" id="44689-DDB0229379"/>
<dbReference type="EnsemblProtists" id="EAL62745">
    <property type="protein sequence ID" value="EAL62745"/>
    <property type="gene ID" value="DDB_G0289435"/>
</dbReference>
<dbReference type="GeneID" id="8627119"/>
<dbReference type="KEGG" id="ddi:DDB_G0289435"/>
<dbReference type="dictyBase" id="DDB_G0289435">
    <property type="gene designation" value="arrF"/>
</dbReference>
<dbReference type="VEuPathDB" id="AmoebaDB:DDB_G0289435"/>
<dbReference type="eggNOG" id="KOG0070">
    <property type="taxonomic scope" value="Eukaryota"/>
</dbReference>
<dbReference type="HOGENOM" id="CLU_040729_9_3_1"/>
<dbReference type="InParanoid" id="Q54HK2"/>
<dbReference type="OMA" id="MANYWTK"/>
<dbReference type="PhylomeDB" id="Q54HK2"/>
<dbReference type="Reactome" id="R-DDI-1660514">
    <property type="pathway name" value="Synthesis of PIPs at the Golgi membrane"/>
</dbReference>
<dbReference type="Reactome" id="R-DDI-199992">
    <property type="pathway name" value="trans-Golgi Network Vesicle Budding"/>
</dbReference>
<dbReference type="Reactome" id="R-DDI-5620916">
    <property type="pathway name" value="VxPx cargo-targeting to cilium"/>
</dbReference>
<dbReference type="Reactome" id="R-DDI-6807878">
    <property type="pathway name" value="COPI-mediated anterograde transport"/>
</dbReference>
<dbReference type="Reactome" id="R-DDI-6811434">
    <property type="pathway name" value="COPI-dependent Golgi-to-ER retrograde traffic"/>
</dbReference>
<dbReference type="Reactome" id="R-DDI-6811438">
    <property type="pathway name" value="Intra-Golgi traffic"/>
</dbReference>
<dbReference type="PRO" id="PR:Q54HK2"/>
<dbReference type="Proteomes" id="UP000002195">
    <property type="component" value="Chromosome 5"/>
</dbReference>
<dbReference type="GO" id="GO:0005737">
    <property type="term" value="C:cytoplasm"/>
    <property type="evidence" value="ECO:0000318"/>
    <property type="project" value="GO_Central"/>
</dbReference>
<dbReference type="GO" id="GO:0005794">
    <property type="term" value="C:Golgi apparatus"/>
    <property type="evidence" value="ECO:0007669"/>
    <property type="project" value="UniProtKB-SubCell"/>
</dbReference>
<dbReference type="GO" id="GO:0005886">
    <property type="term" value="C:plasma membrane"/>
    <property type="evidence" value="ECO:0000318"/>
    <property type="project" value="GO_Central"/>
</dbReference>
<dbReference type="GO" id="GO:0005525">
    <property type="term" value="F:GTP binding"/>
    <property type="evidence" value="ECO:0000318"/>
    <property type="project" value="GO_Central"/>
</dbReference>
<dbReference type="GO" id="GO:0003924">
    <property type="term" value="F:GTPase activity"/>
    <property type="evidence" value="ECO:0007669"/>
    <property type="project" value="InterPro"/>
</dbReference>
<dbReference type="GO" id="GO:0006886">
    <property type="term" value="P:intracellular protein transport"/>
    <property type="evidence" value="ECO:0000318"/>
    <property type="project" value="GO_Central"/>
</dbReference>
<dbReference type="GO" id="GO:0016192">
    <property type="term" value="P:vesicle-mediated transport"/>
    <property type="evidence" value="ECO:0000318"/>
    <property type="project" value="GO_Central"/>
</dbReference>
<dbReference type="CDD" id="cd00878">
    <property type="entry name" value="Arf_Arl"/>
    <property type="match status" value="1"/>
</dbReference>
<dbReference type="FunFam" id="3.40.50.300:FF:000412">
    <property type="entry name" value="ADP-ribosylation factor 1"/>
    <property type="match status" value="1"/>
</dbReference>
<dbReference type="Gene3D" id="3.40.50.300">
    <property type="entry name" value="P-loop containing nucleotide triphosphate hydrolases"/>
    <property type="match status" value="1"/>
</dbReference>
<dbReference type="InterPro" id="IPR027417">
    <property type="entry name" value="P-loop_NTPase"/>
</dbReference>
<dbReference type="InterPro" id="IPR005225">
    <property type="entry name" value="Small_GTP-bd"/>
</dbReference>
<dbReference type="InterPro" id="IPR024156">
    <property type="entry name" value="Small_GTPase_ARF"/>
</dbReference>
<dbReference type="InterPro" id="IPR006689">
    <property type="entry name" value="Small_GTPase_ARF/SAR"/>
</dbReference>
<dbReference type="NCBIfam" id="TIGR00231">
    <property type="entry name" value="small_GTP"/>
    <property type="match status" value="1"/>
</dbReference>
<dbReference type="PANTHER" id="PTHR11711">
    <property type="entry name" value="ADP RIBOSYLATION FACTOR-RELATED"/>
    <property type="match status" value="1"/>
</dbReference>
<dbReference type="Pfam" id="PF00025">
    <property type="entry name" value="Arf"/>
    <property type="match status" value="1"/>
</dbReference>
<dbReference type="PRINTS" id="PR00328">
    <property type="entry name" value="SAR1GTPBP"/>
</dbReference>
<dbReference type="SMART" id="SM00177">
    <property type="entry name" value="ARF"/>
    <property type="match status" value="1"/>
</dbReference>
<dbReference type="SMART" id="SM00175">
    <property type="entry name" value="RAB"/>
    <property type="match status" value="1"/>
</dbReference>
<dbReference type="SMART" id="SM00178">
    <property type="entry name" value="SAR"/>
    <property type="match status" value="1"/>
</dbReference>
<dbReference type="SUPFAM" id="SSF52540">
    <property type="entry name" value="P-loop containing nucleoside triphosphate hydrolases"/>
    <property type="match status" value="1"/>
</dbReference>
<dbReference type="PROSITE" id="PS51417">
    <property type="entry name" value="ARF"/>
    <property type="match status" value="1"/>
</dbReference>
<name>ARFF_DICDI</name>
<organism>
    <name type="scientific">Dictyostelium discoideum</name>
    <name type="common">Social amoeba</name>
    <dbReference type="NCBI Taxonomy" id="44689"/>
    <lineage>
        <taxon>Eukaryota</taxon>
        <taxon>Amoebozoa</taxon>
        <taxon>Evosea</taxon>
        <taxon>Eumycetozoa</taxon>
        <taxon>Dictyostelia</taxon>
        <taxon>Dictyosteliales</taxon>
        <taxon>Dictyosteliaceae</taxon>
        <taxon>Dictyostelium</taxon>
    </lineage>
</organism>
<keyword id="KW-0931">ER-Golgi transport</keyword>
<keyword id="KW-0333">Golgi apparatus</keyword>
<keyword id="KW-0342">GTP-binding</keyword>
<keyword id="KW-0547">Nucleotide-binding</keyword>
<keyword id="KW-0653">Protein transport</keyword>
<keyword id="KW-1185">Reference proteome</keyword>
<keyword id="KW-0813">Transport</keyword>
<feature type="chain" id="PRO_0000328144" description="ADP-ribosylation factor F">
    <location>
        <begin position="1"/>
        <end position="190"/>
    </location>
</feature>
<feature type="binding site" evidence="1">
    <location>
        <begin position="34"/>
        <end position="40"/>
    </location>
    <ligand>
        <name>GTP</name>
        <dbReference type="ChEBI" id="CHEBI:37565"/>
    </ligand>
</feature>
<feature type="binding site" evidence="1">
    <location>
        <begin position="75"/>
        <end position="79"/>
    </location>
    <ligand>
        <name>GTP</name>
        <dbReference type="ChEBI" id="CHEBI:37565"/>
    </ligand>
</feature>
<feature type="binding site" evidence="1">
    <location>
        <begin position="136"/>
        <end position="139"/>
    </location>
    <ligand>
        <name>GTP</name>
        <dbReference type="ChEBI" id="CHEBI:37565"/>
    </ligand>
</feature>
<accession>Q54HK2</accession>
<comment type="function">
    <text evidence="1">GTP-binding protein that may be involved in protein trafficking. May modulate vesicle budding and uncoating within the Golgi apparatus (By similarity).</text>
</comment>
<comment type="subcellular location">
    <subcellularLocation>
        <location evidence="1">Golgi apparatus</location>
    </subcellularLocation>
</comment>
<comment type="similarity">
    <text evidence="2">Belongs to the small GTPase superfamily. Arf family.</text>
</comment>
<gene>
    <name type="primary">arrF</name>
    <name type="ORF">DDB_G0289435</name>
</gene>
<sequence length="190" mass="21782">MLSEFFNNITSFFVNIFSLFEGKRNIRILMIGLDGAGKSTLLYKLKFGDVIRTIPTIGFNVEIIEYKNLSMNVWDIGGQNNIRALWRQYDQRTDVFIFVVDSTDRERFDEVKQEIKNIIEQNKNESSNASLLIFANKQDMLNPITPAELVNSLDLNSLTNKKWHVQPCSAVRGDGIYEGFDWIVSNSSGK</sequence>
<proteinExistence type="inferred from homology"/>